<sequence>MNDQRDQAVPWATGLAVAGFVAAVIAVAVVVLSLGLIRVHPLLAVGLNIVAVSGLAPTLWGWRRTPVLRWFVLGAAVGVAGAWLALLALTLGDG</sequence>
<comment type="subcellular location">
    <subcellularLocation>
        <location evidence="2">Cell membrane</location>
        <topology evidence="2">Multi-pass membrane protein</topology>
    </subcellularLocation>
</comment>
<name>Y882_MYCTO</name>
<evidence type="ECO:0000255" key="1"/>
<evidence type="ECO:0000305" key="2"/>
<protein>
    <recommendedName>
        <fullName>Uncharacterized protein MT0905</fullName>
    </recommendedName>
</protein>
<reference key="1">
    <citation type="journal article" date="2002" name="J. Bacteriol.">
        <title>Whole-genome comparison of Mycobacterium tuberculosis clinical and laboratory strains.</title>
        <authorList>
            <person name="Fleischmann R.D."/>
            <person name="Alland D."/>
            <person name="Eisen J.A."/>
            <person name="Carpenter L."/>
            <person name="White O."/>
            <person name="Peterson J.D."/>
            <person name="DeBoy R.T."/>
            <person name="Dodson R.J."/>
            <person name="Gwinn M.L."/>
            <person name="Haft D.H."/>
            <person name="Hickey E.K."/>
            <person name="Kolonay J.F."/>
            <person name="Nelson W.C."/>
            <person name="Umayam L.A."/>
            <person name="Ermolaeva M.D."/>
            <person name="Salzberg S.L."/>
            <person name="Delcher A."/>
            <person name="Utterback T.R."/>
            <person name="Weidman J.F."/>
            <person name="Khouri H.M."/>
            <person name="Gill J."/>
            <person name="Mikula A."/>
            <person name="Bishai W."/>
            <person name="Jacobs W.R. Jr."/>
            <person name="Venter J.C."/>
            <person name="Fraser C.M."/>
        </authorList>
    </citation>
    <scope>NUCLEOTIDE SEQUENCE [LARGE SCALE GENOMIC DNA]</scope>
    <source>
        <strain>CDC 1551 / Oshkosh</strain>
    </source>
</reference>
<dbReference type="EMBL" id="AE000516">
    <property type="protein sequence ID" value="AAK45147.1"/>
    <property type="molecule type" value="Genomic_DNA"/>
</dbReference>
<dbReference type="PIR" id="G70780">
    <property type="entry name" value="G70780"/>
</dbReference>
<dbReference type="RefSeq" id="WP_003404614.1">
    <property type="nucleotide sequence ID" value="NZ_KK341227.1"/>
</dbReference>
<dbReference type="SMR" id="P9WKQ8"/>
<dbReference type="KEGG" id="mtc:MT0905"/>
<dbReference type="PATRIC" id="fig|83331.31.peg.972"/>
<dbReference type="HOGENOM" id="CLU_176239_0_0_11"/>
<dbReference type="Proteomes" id="UP000001020">
    <property type="component" value="Chromosome"/>
</dbReference>
<dbReference type="GO" id="GO:0005886">
    <property type="term" value="C:plasma membrane"/>
    <property type="evidence" value="ECO:0007669"/>
    <property type="project" value="UniProtKB-SubCell"/>
</dbReference>
<dbReference type="InterPro" id="IPR024244">
    <property type="entry name" value="DUF2537"/>
</dbReference>
<dbReference type="Pfam" id="PF10801">
    <property type="entry name" value="DUF2537"/>
    <property type="match status" value="1"/>
</dbReference>
<keyword id="KW-1003">Cell membrane</keyword>
<keyword id="KW-0472">Membrane</keyword>
<keyword id="KW-1185">Reference proteome</keyword>
<keyword id="KW-0732">Signal</keyword>
<keyword id="KW-0812">Transmembrane</keyword>
<keyword id="KW-1133">Transmembrane helix</keyword>
<feature type="signal peptide" evidence="1">
    <location>
        <begin position="1"/>
        <end position="26"/>
    </location>
</feature>
<feature type="chain" id="PRO_0000427611" description="Uncharacterized protein MT0905">
    <location>
        <begin position="27"/>
        <end position="94"/>
    </location>
</feature>
<feature type="transmembrane region" description="Helical" evidence="1">
    <location>
        <begin position="42"/>
        <end position="62"/>
    </location>
</feature>
<feature type="transmembrane region" description="Helical" evidence="1">
    <location>
        <begin position="71"/>
        <end position="91"/>
    </location>
</feature>
<proteinExistence type="inferred from homology"/>
<accession>P9WKQ8</accession>
<accession>L0T520</accession>
<accession>P64737</accession>
<accession>Q10544</accession>
<organism>
    <name type="scientific">Mycobacterium tuberculosis (strain CDC 1551 / Oshkosh)</name>
    <dbReference type="NCBI Taxonomy" id="83331"/>
    <lineage>
        <taxon>Bacteria</taxon>
        <taxon>Bacillati</taxon>
        <taxon>Actinomycetota</taxon>
        <taxon>Actinomycetes</taxon>
        <taxon>Mycobacteriales</taxon>
        <taxon>Mycobacteriaceae</taxon>
        <taxon>Mycobacterium</taxon>
        <taxon>Mycobacterium tuberculosis complex</taxon>
    </lineage>
</organism>
<gene>
    <name type="ordered locus">MT0905</name>
</gene>